<protein>
    <recommendedName>
        <fullName evidence="1">Small ribosomal subunit protein uS14</fullName>
    </recommendedName>
    <alternativeName>
        <fullName evidence="2">30S ribosomal protein S14 type Z</fullName>
    </alternativeName>
</protein>
<name>RS14Z_SULSY</name>
<keyword id="KW-0479">Metal-binding</keyword>
<keyword id="KW-0687">Ribonucleoprotein</keyword>
<keyword id="KW-0689">Ribosomal protein</keyword>
<keyword id="KW-0694">RNA-binding</keyword>
<keyword id="KW-0699">rRNA-binding</keyword>
<keyword id="KW-0862">Zinc</keyword>
<dbReference type="EMBL" id="CP001080">
    <property type="protein sequence ID" value="ACD65923.1"/>
    <property type="molecule type" value="Genomic_DNA"/>
</dbReference>
<dbReference type="RefSeq" id="WP_012459012.1">
    <property type="nucleotide sequence ID" value="NC_010730.1"/>
</dbReference>
<dbReference type="SMR" id="B2V7K0"/>
<dbReference type="STRING" id="436114.SYO3AOP1_0278"/>
<dbReference type="KEGG" id="sul:SYO3AOP1_0278"/>
<dbReference type="eggNOG" id="COG0199">
    <property type="taxonomic scope" value="Bacteria"/>
</dbReference>
<dbReference type="HOGENOM" id="CLU_139869_3_0_0"/>
<dbReference type="GO" id="GO:0005737">
    <property type="term" value="C:cytoplasm"/>
    <property type="evidence" value="ECO:0007669"/>
    <property type="project" value="UniProtKB-ARBA"/>
</dbReference>
<dbReference type="GO" id="GO:0015935">
    <property type="term" value="C:small ribosomal subunit"/>
    <property type="evidence" value="ECO:0007669"/>
    <property type="project" value="TreeGrafter"/>
</dbReference>
<dbReference type="GO" id="GO:0019843">
    <property type="term" value="F:rRNA binding"/>
    <property type="evidence" value="ECO:0007669"/>
    <property type="project" value="UniProtKB-UniRule"/>
</dbReference>
<dbReference type="GO" id="GO:0003735">
    <property type="term" value="F:structural constituent of ribosome"/>
    <property type="evidence" value="ECO:0007669"/>
    <property type="project" value="InterPro"/>
</dbReference>
<dbReference type="GO" id="GO:0008270">
    <property type="term" value="F:zinc ion binding"/>
    <property type="evidence" value="ECO:0007669"/>
    <property type="project" value="UniProtKB-UniRule"/>
</dbReference>
<dbReference type="GO" id="GO:0006412">
    <property type="term" value="P:translation"/>
    <property type="evidence" value="ECO:0007669"/>
    <property type="project" value="UniProtKB-UniRule"/>
</dbReference>
<dbReference type="Gene3D" id="4.10.830.10">
    <property type="entry name" value="30s Ribosomal Protein S14, Chain N"/>
    <property type="match status" value="1"/>
</dbReference>
<dbReference type="HAMAP" id="MF_01364_B">
    <property type="entry name" value="Ribosomal_uS14_2_B"/>
    <property type="match status" value="1"/>
</dbReference>
<dbReference type="InterPro" id="IPR001209">
    <property type="entry name" value="Ribosomal_uS14"/>
</dbReference>
<dbReference type="InterPro" id="IPR023053">
    <property type="entry name" value="Ribosomal_uS14_bact"/>
</dbReference>
<dbReference type="InterPro" id="IPR018271">
    <property type="entry name" value="Ribosomal_uS14_CS"/>
</dbReference>
<dbReference type="InterPro" id="IPR043140">
    <property type="entry name" value="Ribosomal_uS14_sf"/>
</dbReference>
<dbReference type="NCBIfam" id="NF005974">
    <property type="entry name" value="PRK08061.1"/>
    <property type="match status" value="1"/>
</dbReference>
<dbReference type="PANTHER" id="PTHR19836">
    <property type="entry name" value="30S RIBOSOMAL PROTEIN S14"/>
    <property type="match status" value="1"/>
</dbReference>
<dbReference type="PANTHER" id="PTHR19836:SF19">
    <property type="entry name" value="SMALL RIBOSOMAL SUBUNIT PROTEIN US14M"/>
    <property type="match status" value="1"/>
</dbReference>
<dbReference type="Pfam" id="PF00253">
    <property type="entry name" value="Ribosomal_S14"/>
    <property type="match status" value="1"/>
</dbReference>
<dbReference type="SUPFAM" id="SSF57716">
    <property type="entry name" value="Glucocorticoid receptor-like (DNA-binding domain)"/>
    <property type="match status" value="1"/>
</dbReference>
<dbReference type="PROSITE" id="PS00527">
    <property type="entry name" value="RIBOSOMAL_S14"/>
    <property type="match status" value="1"/>
</dbReference>
<accession>B2V7K0</accession>
<gene>
    <name evidence="1" type="primary">rpsZ</name>
    <name evidence="1" type="synonym">rpsN</name>
    <name type="ordered locus">SYO3AOP1_0278</name>
</gene>
<comment type="function">
    <text evidence="1">Binds 16S rRNA, required for the assembly of 30S particles and may also be responsible for determining the conformation of the 16S rRNA at the A site.</text>
</comment>
<comment type="cofactor">
    <cofactor evidence="1">
        <name>Zn(2+)</name>
        <dbReference type="ChEBI" id="CHEBI:29105"/>
    </cofactor>
    <text evidence="1">Binds 1 zinc ion per subunit.</text>
</comment>
<comment type="subunit">
    <text evidence="1">Part of the 30S ribosomal subunit. Contacts proteins S3 and S10.</text>
</comment>
<comment type="similarity">
    <text evidence="1">Belongs to the universal ribosomal protein uS14 family. Zinc-binding uS14 subfamily.</text>
</comment>
<evidence type="ECO:0000255" key="1">
    <source>
        <dbReference type="HAMAP-Rule" id="MF_01364"/>
    </source>
</evidence>
<evidence type="ECO:0000305" key="2"/>
<organism>
    <name type="scientific">Sulfurihydrogenibium sp. (strain YO3AOP1)</name>
    <dbReference type="NCBI Taxonomy" id="436114"/>
    <lineage>
        <taxon>Bacteria</taxon>
        <taxon>Pseudomonadati</taxon>
        <taxon>Aquificota</taxon>
        <taxon>Aquificia</taxon>
        <taxon>Aquificales</taxon>
        <taxon>Hydrogenothermaceae</taxon>
        <taxon>Sulfurihydrogenibium</taxon>
    </lineage>
</organism>
<sequence>MARKCLLVKSFIKKPKYSTRNKSRCPLCGRPRGYIRQFGMCRICFREKALRGEIPGVRKASW</sequence>
<reference key="1">
    <citation type="journal article" date="2009" name="J. Bacteriol.">
        <title>Complete and draft genome sequences of six members of the Aquificales.</title>
        <authorList>
            <person name="Reysenbach A.-L."/>
            <person name="Hamamura N."/>
            <person name="Podar M."/>
            <person name="Griffiths E."/>
            <person name="Ferreira S."/>
            <person name="Hochstein R."/>
            <person name="Heidelberg J."/>
            <person name="Johnson J."/>
            <person name="Mead D."/>
            <person name="Pohorille A."/>
            <person name="Sarmiento M."/>
            <person name="Schweighofer K."/>
            <person name="Seshadri R."/>
            <person name="Voytek M.A."/>
        </authorList>
    </citation>
    <scope>NUCLEOTIDE SEQUENCE [LARGE SCALE GENOMIC DNA]</scope>
    <source>
        <strain>YO3AOP1</strain>
    </source>
</reference>
<proteinExistence type="inferred from homology"/>
<feature type="chain" id="PRO_1000143921" description="Small ribosomal subunit protein uS14">
    <location>
        <begin position="1"/>
        <end position="62"/>
    </location>
</feature>
<feature type="binding site" evidence="1">
    <location>
        <position position="25"/>
    </location>
    <ligand>
        <name>Zn(2+)</name>
        <dbReference type="ChEBI" id="CHEBI:29105"/>
    </ligand>
</feature>
<feature type="binding site" evidence="1">
    <location>
        <position position="28"/>
    </location>
    <ligand>
        <name>Zn(2+)</name>
        <dbReference type="ChEBI" id="CHEBI:29105"/>
    </ligand>
</feature>
<feature type="binding site" evidence="1">
    <location>
        <position position="41"/>
    </location>
    <ligand>
        <name>Zn(2+)</name>
        <dbReference type="ChEBI" id="CHEBI:29105"/>
    </ligand>
</feature>
<feature type="binding site" evidence="1">
    <location>
        <position position="44"/>
    </location>
    <ligand>
        <name>Zn(2+)</name>
        <dbReference type="ChEBI" id="CHEBI:29105"/>
    </ligand>
</feature>